<protein>
    <recommendedName>
        <fullName evidence="1">Bifunctional protein Aas</fullName>
    </recommendedName>
    <domain>
        <recommendedName>
            <fullName evidence="1">2-acylglycerophosphoethanolamine acyltransferase</fullName>
            <ecNumber evidence="1">2.3.1.40</ecNumber>
        </recommendedName>
        <alternativeName>
            <fullName evidence="1">2-acyl-GPE acyltransferase</fullName>
        </alternativeName>
        <alternativeName>
            <fullName evidence="1">Acyl-[acyl-carrier-protein]--phospholipid O-acyltransferase</fullName>
        </alternativeName>
    </domain>
    <domain>
        <recommendedName>
            <fullName evidence="1">Acyl-[acyl-carrier-protein] synthetase</fullName>
            <ecNumber evidence="1">6.2.1.20</ecNumber>
        </recommendedName>
        <alternativeName>
            <fullName evidence="1">Acyl-ACP synthetase</fullName>
        </alternativeName>
        <alternativeName>
            <fullName evidence="1">Long-chain-fatty-acid--[acyl-carrier-protein] ligase</fullName>
        </alternativeName>
    </domain>
</protein>
<gene>
    <name evidence="1" type="primary">aas</name>
    <name type="ordered locus">b2836</name>
    <name type="ordered locus">JW2804</name>
</gene>
<dbReference type="EC" id="2.3.1.40" evidence="1"/>
<dbReference type="EC" id="6.2.1.20" evidence="1"/>
<dbReference type="EMBL" id="L14681">
    <property type="protein sequence ID" value="AAA17550.1"/>
    <property type="molecule type" value="Unassigned_DNA"/>
</dbReference>
<dbReference type="EMBL" id="U29581">
    <property type="protein sequence ID" value="AAB40483.1"/>
    <property type="molecule type" value="Genomic_DNA"/>
</dbReference>
<dbReference type="EMBL" id="U00096">
    <property type="protein sequence ID" value="AAC75875.1"/>
    <property type="molecule type" value="Genomic_DNA"/>
</dbReference>
<dbReference type="EMBL" id="AP009048">
    <property type="protein sequence ID" value="BAE76905.1"/>
    <property type="molecule type" value="Genomic_DNA"/>
</dbReference>
<dbReference type="EMBL" id="AY625100">
    <property type="protein sequence ID" value="AAT42454.1"/>
    <property type="molecule type" value="Genomic_DNA"/>
</dbReference>
<dbReference type="PIR" id="E65066">
    <property type="entry name" value="E65066"/>
</dbReference>
<dbReference type="RefSeq" id="NP_417313.1">
    <property type="nucleotide sequence ID" value="NC_000913.3"/>
</dbReference>
<dbReference type="RefSeq" id="WP_000899054.1">
    <property type="nucleotide sequence ID" value="NZ_STEB01000034.1"/>
</dbReference>
<dbReference type="SMR" id="P31119"/>
<dbReference type="BioGRID" id="4259527">
    <property type="interactions" value="45"/>
</dbReference>
<dbReference type="DIP" id="DIP-9025N"/>
<dbReference type="FunCoup" id="P31119">
    <property type="interactions" value="207"/>
</dbReference>
<dbReference type="IntAct" id="P31119">
    <property type="interactions" value="9"/>
</dbReference>
<dbReference type="STRING" id="511145.b2836"/>
<dbReference type="TCDB" id="4.C.1.1.16">
    <property type="family name" value="the fatty acid group translocation (fat) family"/>
</dbReference>
<dbReference type="jPOST" id="P31119"/>
<dbReference type="PaxDb" id="511145-b2836"/>
<dbReference type="EnsemblBacteria" id="AAC75875">
    <property type="protein sequence ID" value="AAC75875"/>
    <property type="gene ID" value="b2836"/>
</dbReference>
<dbReference type="GeneID" id="947315"/>
<dbReference type="KEGG" id="ecj:JW2804"/>
<dbReference type="KEGG" id="eco:b2836"/>
<dbReference type="KEGG" id="ecoc:C3026_15575"/>
<dbReference type="PATRIC" id="fig|1411691.4.peg.3898"/>
<dbReference type="EchoBASE" id="EB1630"/>
<dbReference type="eggNOG" id="COG0204">
    <property type="taxonomic scope" value="Bacteria"/>
</dbReference>
<dbReference type="eggNOG" id="COG0318">
    <property type="taxonomic scope" value="Bacteria"/>
</dbReference>
<dbReference type="HOGENOM" id="CLU_000022_59_8_6"/>
<dbReference type="InParanoid" id="P31119"/>
<dbReference type="OMA" id="ANWVYLE"/>
<dbReference type="OrthoDB" id="9803968at2"/>
<dbReference type="PhylomeDB" id="P31119"/>
<dbReference type="BioCyc" id="EcoCyc:AAS-MONOMER"/>
<dbReference type="BioCyc" id="MetaCyc:AAS-MONOMER"/>
<dbReference type="BRENDA" id="2.3.1.40">
    <property type="organism ID" value="2026"/>
</dbReference>
<dbReference type="PRO" id="PR:P31119"/>
<dbReference type="Proteomes" id="UP000000625">
    <property type="component" value="Chromosome"/>
</dbReference>
<dbReference type="GO" id="GO:0016020">
    <property type="term" value="C:membrane"/>
    <property type="evidence" value="ECO:0000318"/>
    <property type="project" value="GO_Central"/>
</dbReference>
<dbReference type="GO" id="GO:0005886">
    <property type="term" value="C:plasma membrane"/>
    <property type="evidence" value="ECO:0000314"/>
    <property type="project" value="EcoCyc"/>
</dbReference>
<dbReference type="GO" id="GO:0008779">
    <property type="term" value="F:acyl-[acyl-carrier-protein]-phospholipid O-acyltransferase activity"/>
    <property type="evidence" value="ECO:0000314"/>
    <property type="project" value="EcoliWiki"/>
</dbReference>
<dbReference type="GO" id="GO:0005524">
    <property type="term" value="F:ATP binding"/>
    <property type="evidence" value="ECO:0007669"/>
    <property type="project" value="UniProtKB-KW"/>
</dbReference>
<dbReference type="GO" id="GO:0008922">
    <property type="term" value="F:long-chain fatty acid [acyl-carrier-protein] ligase activity"/>
    <property type="evidence" value="ECO:0000314"/>
    <property type="project" value="EcoliWiki"/>
</dbReference>
<dbReference type="GO" id="GO:0004467">
    <property type="term" value="F:long-chain fatty acid-CoA ligase activity"/>
    <property type="evidence" value="ECO:0000318"/>
    <property type="project" value="GO_Central"/>
</dbReference>
<dbReference type="GO" id="GO:0006631">
    <property type="term" value="P:fatty acid metabolic process"/>
    <property type="evidence" value="ECO:0000316"/>
    <property type="project" value="EcoliWiki"/>
</dbReference>
<dbReference type="GO" id="GO:0008654">
    <property type="term" value="P:phospholipid biosynthetic process"/>
    <property type="evidence" value="ECO:0000316"/>
    <property type="project" value="EcoliWiki"/>
</dbReference>
<dbReference type="CDD" id="cd05909">
    <property type="entry name" value="AAS_C"/>
    <property type="match status" value="1"/>
</dbReference>
<dbReference type="CDD" id="cd07989">
    <property type="entry name" value="LPLAT_AGPAT-like"/>
    <property type="match status" value="1"/>
</dbReference>
<dbReference type="FunFam" id="3.30.300.30:FF:000009">
    <property type="entry name" value="Bifunctional protein Aas"/>
    <property type="match status" value="1"/>
</dbReference>
<dbReference type="FunFam" id="3.40.50.12780:FF:000009">
    <property type="entry name" value="Bifunctional protein Aas"/>
    <property type="match status" value="1"/>
</dbReference>
<dbReference type="Gene3D" id="3.30.300.30">
    <property type="match status" value="1"/>
</dbReference>
<dbReference type="Gene3D" id="3.40.50.12780">
    <property type="entry name" value="N-terminal domain of ligase-like"/>
    <property type="match status" value="1"/>
</dbReference>
<dbReference type="HAMAP" id="MF_01162">
    <property type="entry name" value="Aas"/>
    <property type="match status" value="1"/>
</dbReference>
<dbReference type="InterPro" id="IPR023775">
    <property type="entry name" value="Aas"/>
</dbReference>
<dbReference type="InterPro" id="IPR045851">
    <property type="entry name" value="AMP-bd_C_sf"/>
</dbReference>
<dbReference type="InterPro" id="IPR020845">
    <property type="entry name" value="AMP-binding_CS"/>
</dbReference>
<dbReference type="InterPro" id="IPR000873">
    <property type="entry name" value="AMP-dep_synth/lig_dom"/>
</dbReference>
<dbReference type="InterPro" id="IPR042099">
    <property type="entry name" value="ANL_N_sf"/>
</dbReference>
<dbReference type="InterPro" id="IPR002123">
    <property type="entry name" value="Plipid/glycerol_acylTrfase"/>
</dbReference>
<dbReference type="NCBIfam" id="NF005959">
    <property type="entry name" value="PRK08043.1"/>
    <property type="match status" value="1"/>
</dbReference>
<dbReference type="PANTHER" id="PTHR43201">
    <property type="entry name" value="ACYL-COA SYNTHETASE"/>
    <property type="match status" value="1"/>
</dbReference>
<dbReference type="PANTHER" id="PTHR43201:SF8">
    <property type="entry name" value="ACYL-COA SYNTHETASE FAMILY MEMBER 3"/>
    <property type="match status" value="1"/>
</dbReference>
<dbReference type="Pfam" id="PF01553">
    <property type="entry name" value="Acyltransferase"/>
    <property type="match status" value="1"/>
</dbReference>
<dbReference type="Pfam" id="PF00501">
    <property type="entry name" value="AMP-binding"/>
    <property type="match status" value="1"/>
</dbReference>
<dbReference type="SMART" id="SM00563">
    <property type="entry name" value="PlsC"/>
    <property type="match status" value="1"/>
</dbReference>
<dbReference type="SUPFAM" id="SSF56801">
    <property type="entry name" value="Acetyl-CoA synthetase-like"/>
    <property type="match status" value="1"/>
</dbReference>
<dbReference type="SUPFAM" id="SSF69593">
    <property type="entry name" value="Glycerol-3-phosphate (1)-acyltransferase"/>
    <property type="match status" value="1"/>
</dbReference>
<dbReference type="PROSITE" id="PS00455">
    <property type="entry name" value="AMP_BINDING"/>
    <property type="match status" value="1"/>
</dbReference>
<reference key="1">
    <citation type="journal article" date="1994" name="J. Biol. Chem.">
        <title>Sequence and function of the aas gene in Escherichia coli.</title>
        <authorList>
            <person name="Jackowski S."/>
            <person name="Jackson P.D."/>
            <person name="Rock C.O."/>
        </authorList>
    </citation>
    <scope>NUCLEOTIDE SEQUENCE [GENOMIC DNA]</scope>
    <source>
        <strain>K12</strain>
    </source>
</reference>
<reference key="2">
    <citation type="journal article" date="1997" name="Science">
        <title>The complete genome sequence of Escherichia coli K-12.</title>
        <authorList>
            <person name="Blattner F.R."/>
            <person name="Plunkett G. III"/>
            <person name="Bloch C.A."/>
            <person name="Perna N.T."/>
            <person name="Burland V."/>
            <person name="Riley M."/>
            <person name="Collado-Vides J."/>
            <person name="Glasner J.D."/>
            <person name="Rode C.K."/>
            <person name="Mayhew G.F."/>
            <person name="Gregor J."/>
            <person name="Davis N.W."/>
            <person name="Kirkpatrick H.A."/>
            <person name="Goeden M.A."/>
            <person name="Rose D.J."/>
            <person name="Mau B."/>
            <person name="Shao Y."/>
        </authorList>
    </citation>
    <scope>NUCLEOTIDE SEQUENCE [LARGE SCALE GENOMIC DNA]</scope>
    <source>
        <strain>K12 / MG1655 / ATCC 47076</strain>
    </source>
</reference>
<reference key="3">
    <citation type="journal article" date="2006" name="Mol. Syst. Biol.">
        <title>Highly accurate genome sequences of Escherichia coli K-12 strains MG1655 and W3110.</title>
        <authorList>
            <person name="Hayashi K."/>
            <person name="Morooka N."/>
            <person name="Yamamoto Y."/>
            <person name="Fujita K."/>
            <person name="Isono K."/>
            <person name="Choi S."/>
            <person name="Ohtsubo E."/>
            <person name="Baba T."/>
            <person name="Wanner B.L."/>
            <person name="Mori H."/>
            <person name="Horiuchi T."/>
        </authorList>
    </citation>
    <scope>NUCLEOTIDE SEQUENCE [LARGE SCALE GENOMIC DNA]</scope>
    <source>
        <strain>K12 / W3110 / ATCC 27325 / DSM 5911</strain>
    </source>
</reference>
<reference key="4">
    <citation type="journal article" date="2003" name="J. Mol. Evol.">
        <title>Rates of DNA sequence evolution in experimental populations of Escherichia coli during 20,000 generations.</title>
        <authorList>
            <person name="Lenski R.E."/>
            <person name="Winkworth C.L."/>
            <person name="Riley M.A."/>
        </authorList>
    </citation>
    <scope>NUCLEOTIDE SEQUENCE [GENOMIC DNA] OF 150-311</scope>
    <source>
        <strain>B / Bc251</strain>
    </source>
</reference>
<reference key="5">
    <citation type="journal article" date="1991" name="J. Biol. Chem.">
        <title>Isolation and characterization of Escherichia coli K-12 mutants lacking both 2-acyl-glycerophosphoethanolamine acyltransferase and acyl-acyl carrier protein synthetase activity.</title>
        <authorList>
            <person name="Hsu L."/>
            <person name="Jackowski S."/>
            <person name="Rock C.O."/>
        </authorList>
    </citation>
    <scope>FUNCTION</scope>
    <source>
        <strain>K12</strain>
    </source>
</reference>
<reference key="6">
    <citation type="journal article" date="1998" name="J. Bacteriol.">
        <title>A conserved histidine is essential for glycerolipid acyltransferase catalysis.</title>
        <authorList>
            <person name="Heath R.J."/>
            <person name="Rock C.O."/>
        </authorList>
    </citation>
    <scope>MUTAGENESIS OF HIS-36</scope>
    <source>
        <strain>K12</strain>
    </source>
</reference>
<keyword id="KW-0012">Acyltransferase</keyword>
<keyword id="KW-0067">ATP-binding</keyword>
<keyword id="KW-0997">Cell inner membrane</keyword>
<keyword id="KW-1003">Cell membrane</keyword>
<keyword id="KW-0436">Ligase</keyword>
<keyword id="KW-0472">Membrane</keyword>
<keyword id="KW-0511">Multifunctional enzyme</keyword>
<keyword id="KW-0547">Nucleotide-binding</keyword>
<keyword id="KW-1185">Reference proteome</keyword>
<keyword id="KW-0808">Transferase</keyword>
<keyword id="KW-0812">Transmembrane</keyword>
<keyword id="KW-1133">Transmembrane helix</keyword>
<organism>
    <name type="scientific">Escherichia coli (strain K12)</name>
    <dbReference type="NCBI Taxonomy" id="83333"/>
    <lineage>
        <taxon>Bacteria</taxon>
        <taxon>Pseudomonadati</taxon>
        <taxon>Pseudomonadota</taxon>
        <taxon>Gammaproteobacteria</taxon>
        <taxon>Enterobacterales</taxon>
        <taxon>Enterobacteriaceae</taxon>
        <taxon>Escherichia</taxon>
    </lineage>
</organism>
<feature type="chain" id="PRO_0000193046" description="Bifunctional protein Aas">
    <location>
        <begin position="1"/>
        <end position="719"/>
    </location>
</feature>
<feature type="transmembrane region" description="Helical" evidence="1">
    <location>
        <begin position="258"/>
        <end position="277"/>
    </location>
</feature>
<feature type="transmembrane region" description="Helical" evidence="1">
    <location>
        <begin position="409"/>
        <end position="433"/>
    </location>
</feature>
<feature type="region of interest" description="Acyltransferase">
    <location>
        <begin position="15"/>
        <end position="138"/>
    </location>
</feature>
<feature type="region of interest" description="AMP-binding">
    <location>
        <begin position="233"/>
        <end position="646"/>
    </location>
</feature>
<feature type="active site">
    <location>
        <position position="36"/>
    </location>
</feature>
<feature type="mutagenesis site" description="Loss of 2-acyl-GPE acyltransferase activity; retains acyl-ACP synthetase activity." evidence="3">
    <original>H</original>
    <variation>A</variation>
    <location>
        <position position="36"/>
    </location>
</feature>
<feature type="sequence conflict" description="In Ref. 1; AAA17550." evidence="4" ref="1">
    <original>RV</original>
    <variation>AL</variation>
    <location>
        <begin position="15"/>
        <end position="16"/>
    </location>
</feature>
<feature type="sequence conflict" description="In Ref. 1; AAA17550." evidence="4" ref="1">
    <original>P</original>
    <variation>S</variation>
    <location>
        <position position="202"/>
    </location>
</feature>
<feature type="sequence conflict" description="In Ref. 4; AAT42454." evidence="4" ref="4">
    <original>M</original>
    <variation>I</variation>
    <location>
        <position position="281"/>
    </location>
</feature>
<accession>P31119</accession>
<accession>Q2MA01</accession>
<accession>Q46935</accession>
<accession>Q6IU49</accession>
<evidence type="ECO:0000255" key="1">
    <source>
        <dbReference type="HAMAP-Rule" id="MF_01162"/>
    </source>
</evidence>
<evidence type="ECO:0000269" key="2">
    <source>
    </source>
</evidence>
<evidence type="ECO:0000269" key="3">
    <source>
    </source>
</evidence>
<evidence type="ECO:0000305" key="4"/>
<comment type="function">
    <text evidence="1 2">Plays a role in lysophospholipid acylation. Transfers fatty acids to the 1-position via an enzyme-bound acyl-ACP intermediate in the presence of ATP and magnesium. Its physiological function is to regenerate phosphatidylethanolamine from 2-acyl-glycero-3-phosphoethanolamine (2-acyl-GPE) formed by transacylation reactions or degradation by phospholipase A1.</text>
</comment>
<comment type="catalytic activity">
    <reaction evidence="1">
        <text>a 2-acyl-sn-glycero-3-phosphoethanolamine + a fatty acyl-[ACP] = a 1,2-diacyl-sn-glycero-3-phosphoethanolamine + holo-[ACP]</text>
        <dbReference type="Rhea" id="RHEA:10304"/>
        <dbReference type="Rhea" id="RHEA-COMP:9685"/>
        <dbReference type="Rhea" id="RHEA-COMP:14125"/>
        <dbReference type="ChEBI" id="CHEBI:64479"/>
        <dbReference type="ChEBI" id="CHEBI:64612"/>
        <dbReference type="ChEBI" id="CHEBI:65213"/>
        <dbReference type="ChEBI" id="CHEBI:138651"/>
        <dbReference type="EC" id="2.3.1.40"/>
    </reaction>
</comment>
<comment type="catalytic activity">
    <reaction evidence="1">
        <text>a long-chain fatty acid + holo-[ACP] + ATP = a long-chain fatty acyl-[ACP] + AMP + diphosphate</text>
        <dbReference type="Rhea" id="RHEA:45588"/>
        <dbReference type="Rhea" id="RHEA-COMP:9685"/>
        <dbReference type="Rhea" id="RHEA-COMP:12682"/>
        <dbReference type="ChEBI" id="CHEBI:30616"/>
        <dbReference type="ChEBI" id="CHEBI:33019"/>
        <dbReference type="ChEBI" id="CHEBI:57560"/>
        <dbReference type="ChEBI" id="CHEBI:64479"/>
        <dbReference type="ChEBI" id="CHEBI:133243"/>
        <dbReference type="ChEBI" id="CHEBI:456215"/>
        <dbReference type="EC" id="6.2.1.20"/>
    </reaction>
</comment>
<comment type="subcellular location">
    <subcellularLocation>
        <location>Cell inner membrane</location>
        <topology>Multi-pass membrane protein</topology>
    </subcellularLocation>
</comment>
<comment type="similarity">
    <text evidence="1">In the N-terminal section; belongs to the 2-acyl-GPE acetyltransferase family.</text>
</comment>
<comment type="similarity">
    <text evidence="1">In the C-terminal section; belongs to the ATP-dependent AMP-binding enzyme family.</text>
</comment>
<sequence length="719" mass="80700">MLFSFFRNLCRVLYRVRVTGDTQALKGERVLITPNHVSFIDGILLGLFLPVRPVFAVYTSISQQWYMRWLKSFIDFVPLDPTQPMAIKHLVRLVEQGRPVVIFPEGRITTTGSLMKIYDGAGFVAAKSGATVIPVRIEGAELTHFSRLKGLVKRRLFPQITLHILPPTQVAMPDAPRARDRRKIAGEMLHQIMMEARMAVRPRETLYESLLSAMYRFGAGKKCVEDVNFTPDSYRKLLTKTLFVGRILEKYSVEGERIGLMLPNAGISAAVIFGAIARRRMPAMMNYTAGVKGLTSAITAAEIKTIFTSRQFLDKGKLWHLPEQLTQVRWVYLEDLKADVTTADKVWIFAHLLMPRLAQVKQQPEEEALILFTSGSEGHPKGVVHSHKSILANVEQIKTIADFTTNDRFMSALPLFHSFGLTVGLFTPLLTGAEVFLYPSPLHYRIVPELVYDRSCTVLFGTSTFLGHYARFANPYDFYRLRYVVAGAEKLQESTKQLWQDKFGLRILEGYGVTECAPVVSINVPMAAKPGTVGRILPGMDARLLSVPGIEEGGRLQLKGPNIMNGYLRVEKPGVLEVPTAENVRGEMERGWYDTGDIVRFDEQGFVQIQGRAKRFAKIAGEMVSLEMVEQLALGVSPDKVHATAIKSDASKGEALVLFTTDNELTRDKLQQYAREHGVPELAVPRDIRYLKQMPLLGSGKPDFVTLKSWVDEAEQHDE</sequence>
<proteinExistence type="evidence at protein level"/>
<name>AAS_ECOLI</name>